<gene>
    <name evidence="1" type="primary">yaaA</name>
    <name type="ordered locus">SeSA_A0005</name>
</gene>
<feature type="chain" id="PRO_1000131143" description="UPF0246 protein YaaA">
    <location>
        <begin position="1"/>
        <end position="257"/>
    </location>
</feature>
<evidence type="ECO:0000255" key="1">
    <source>
        <dbReference type="HAMAP-Rule" id="MF_00652"/>
    </source>
</evidence>
<proteinExistence type="inferred from homology"/>
<dbReference type="EMBL" id="CP001127">
    <property type="protein sequence ID" value="ACF92862.1"/>
    <property type="molecule type" value="Genomic_DNA"/>
</dbReference>
<dbReference type="RefSeq" id="WP_000906174.1">
    <property type="nucleotide sequence ID" value="NC_011094.1"/>
</dbReference>
<dbReference type="SMR" id="B4TVY7"/>
<dbReference type="KEGG" id="sew:SeSA_A0005"/>
<dbReference type="HOGENOM" id="CLU_061989_0_0_6"/>
<dbReference type="Proteomes" id="UP000001865">
    <property type="component" value="Chromosome"/>
</dbReference>
<dbReference type="GO" id="GO:0005829">
    <property type="term" value="C:cytosol"/>
    <property type="evidence" value="ECO:0007669"/>
    <property type="project" value="TreeGrafter"/>
</dbReference>
<dbReference type="GO" id="GO:0033194">
    <property type="term" value="P:response to hydroperoxide"/>
    <property type="evidence" value="ECO:0007669"/>
    <property type="project" value="TreeGrafter"/>
</dbReference>
<dbReference type="HAMAP" id="MF_00652">
    <property type="entry name" value="UPF0246"/>
    <property type="match status" value="1"/>
</dbReference>
<dbReference type="InterPro" id="IPR005583">
    <property type="entry name" value="YaaA"/>
</dbReference>
<dbReference type="NCBIfam" id="NF002541">
    <property type="entry name" value="PRK02101.1-1"/>
    <property type="match status" value="1"/>
</dbReference>
<dbReference type="NCBIfam" id="NF002542">
    <property type="entry name" value="PRK02101.1-3"/>
    <property type="match status" value="1"/>
</dbReference>
<dbReference type="PANTHER" id="PTHR30283:SF4">
    <property type="entry name" value="PEROXIDE STRESS RESISTANCE PROTEIN YAAA"/>
    <property type="match status" value="1"/>
</dbReference>
<dbReference type="PANTHER" id="PTHR30283">
    <property type="entry name" value="PEROXIDE STRESS RESPONSE PROTEIN YAAA"/>
    <property type="match status" value="1"/>
</dbReference>
<dbReference type="Pfam" id="PF03883">
    <property type="entry name" value="H2O2_YaaD"/>
    <property type="match status" value="1"/>
</dbReference>
<organism>
    <name type="scientific">Salmonella schwarzengrund (strain CVM19633)</name>
    <dbReference type="NCBI Taxonomy" id="439843"/>
    <lineage>
        <taxon>Bacteria</taxon>
        <taxon>Pseudomonadati</taxon>
        <taxon>Pseudomonadota</taxon>
        <taxon>Gammaproteobacteria</taxon>
        <taxon>Enterobacterales</taxon>
        <taxon>Enterobacteriaceae</taxon>
        <taxon>Salmonella</taxon>
    </lineage>
</organism>
<sequence length="257" mass="29764">MLILISPAKTLDYQSPLATTRYTQPELLDHSQQLIQQARQLSAPQISRLMGISDKLADLNATRFHDWQPHFTPDNARQAILAFKGDVYTGLQAETFNDADFDFAQQHLRMLSGLYGVLRPLDLMQPYRLEMGIRLENPRGKDLYQFWGDIITDKLNEALEAQGDRVVVNLASEEYFKSVKPKKLNAELIKPVFLDEKNGKFKVVSFYAKKARGLMSRFIIENRLTKPEQLTAFDREGYFFDEETSTKDELVFKRYEQ</sequence>
<accession>B4TVY7</accession>
<comment type="similarity">
    <text evidence="1">Belongs to the UPF0246 family.</text>
</comment>
<name>YAAA_SALSV</name>
<reference key="1">
    <citation type="journal article" date="2011" name="J. Bacteriol.">
        <title>Comparative genomics of 28 Salmonella enterica isolates: evidence for CRISPR-mediated adaptive sublineage evolution.</title>
        <authorList>
            <person name="Fricke W.F."/>
            <person name="Mammel M.K."/>
            <person name="McDermott P.F."/>
            <person name="Tartera C."/>
            <person name="White D.G."/>
            <person name="Leclerc J.E."/>
            <person name="Ravel J."/>
            <person name="Cebula T.A."/>
        </authorList>
    </citation>
    <scope>NUCLEOTIDE SEQUENCE [LARGE SCALE GENOMIC DNA]</scope>
    <source>
        <strain>CVM19633</strain>
    </source>
</reference>
<protein>
    <recommendedName>
        <fullName evidence="1">UPF0246 protein YaaA</fullName>
    </recommendedName>
</protein>